<evidence type="ECO:0000269" key="1">
    <source>
    </source>
</evidence>
<evidence type="ECO:0000303" key="2">
    <source>
    </source>
</evidence>
<evidence type="ECO:0000305" key="3"/>
<reference evidence="3" key="1">
    <citation type="journal article" date="2007" name="J. Proteome Res.">
        <title>Amphibian skin secretomics: application of parallel quadrupole time-of-flight mass spectrometry and peptide precursor cDNA cloning to rapidly characterize the skin secretory peptidome of Phyllomedusa hypochondrialis azurea: discovery of a novel peptide family, the hyposins.</title>
        <authorList>
            <person name="Thompson A.H."/>
            <person name="Bjourson A.J."/>
            <person name="Orr D.F."/>
            <person name="Shaw C."/>
            <person name="McClean S."/>
        </authorList>
    </citation>
    <scope>PROTEIN SEQUENCE</scope>
    <scope>SUBCELLULAR LOCATION</scope>
    <scope>TISSUE SPECIFICITY</scope>
    <scope>MASS SPECTROMETRY</scope>
    <scope>AMIDATION AT VAL-10</scope>
    <source>
        <tissue evidence="1">Skin secretion</tissue>
    </source>
</reference>
<comment type="subcellular location">
    <subcellularLocation>
        <location evidence="1">Secreted</location>
    </subcellularLocation>
</comment>
<comment type="tissue specificity">
    <text evidence="1">Expressed by the skin glands.</text>
</comment>
<comment type="mass spectrometry" mass="1222.72" method="MALDI" evidence="1"/>
<comment type="caution">
    <text evidence="3">PubMed:17696382 incorrectly cites this protein with the AC P84951.</text>
</comment>
<protein>
    <recommendedName>
        <fullName evidence="2">Novel peptide 3</fullName>
    </recommendedName>
    <alternativeName>
        <fullName evidence="2">TRP-HA1</fullName>
    </alternativeName>
</protein>
<organism>
    <name type="scientific">Pithecopus azureus</name>
    <name type="common">Orange-legged monkey tree frog</name>
    <name type="synonym">Phyllomedusa azurea</name>
    <dbReference type="NCBI Taxonomy" id="2034991"/>
    <lineage>
        <taxon>Eukaryota</taxon>
        <taxon>Metazoa</taxon>
        <taxon>Chordata</taxon>
        <taxon>Craniata</taxon>
        <taxon>Vertebrata</taxon>
        <taxon>Euteleostomi</taxon>
        <taxon>Amphibia</taxon>
        <taxon>Batrachia</taxon>
        <taxon>Anura</taxon>
        <taxon>Neobatrachia</taxon>
        <taxon>Hyloidea</taxon>
        <taxon>Hylidae</taxon>
        <taxon>Phyllomedusinae</taxon>
        <taxon>Pithecopus</taxon>
    </lineage>
</organism>
<dbReference type="GO" id="GO:0005576">
    <property type="term" value="C:extracellular region"/>
    <property type="evidence" value="ECO:0007669"/>
    <property type="project" value="UniProtKB-SubCell"/>
</dbReference>
<name>NOVP3_PITAZ</name>
<accession>P84960</accession>
<keyword id="KW-0027">Amidation</keyword>
<keyword id="KW-0903">Direct protein sequencing</keyword>
<keyword id="KW-0964">Secreted</keyword>
<sequence length="10" mass="1224">VMYYSLPRPV</sequence>
<proteinExistence type="evidence at protein level"/>
<feature type="peptide" id="PRO_0000250436" description="Novel peptide 3" evidence="1">
    <location>
        <begin position="1"/>
        <end position="10"/>
    </location>
</feature>
<feature type="modified residue" description="Valine amide" evidence="1">
    <location>
        <position position="10"/>
    </location>
</feature>